<gene>
    <name evidence="1" type="primary">rpoC</name>
    <name type="ordered locus">CKL_0217</name>
</gene>
<dbReference type="EC" id="2.7.7.6" evidence="1"/>
<dbReference type="EMBL" id="CP000673">
    <property type="protein sequence ID" value="EDK32271.1"/>
    <property type="molecule type" value="Genomic_DNA"/>
</dbReference>
<dbReference type="RefSeq" id="WP_011988797.1">
    <property type="nucleotide sequence ID" value="NC_009706.1"/>
</dbReference>
<dbReference type="SMR" id="A5N4P0"/>
<dbReference type="STRING" id="431943.CKL_0217"/>
<dbReference type="KEGG" id="ckl:CKL_0217"/>
<dbReference type="eggNOG" id="COG0086">
    <property type="taxonomic scope" value="Bacteria"/>
</dbReference>
<dbReference type="HOGENOM" id="CLU_000524_3_1_9"/>
<dbReference type="Proteomes" id="UP000002411">
    <property type="component" value="Chromosome"/>
</dbReference>
<dbReference type="GO" id="GO:0000428">
    <property type="term" value="C:DNA-directed RNA polymerase complex"/>
    <property type="evidence" value="ECO:0007669"/>
    <property type="project" value="UniProtKB-KW"/>
</dbReference>
<dbReference type="GO" id="GO:0003677">
    <property type="term" value="F:DNA binding"/>
    <property type="evidence" value="ECO:0007669"/>
    <property type="project" value="UniProtKB-UniRule"/>
</dbReference>
<dbReference type="GO" id="GO:0003899">
    <property type="term" value="F:DNA-directed RNA polymerase activity"/>
    <property type="evidence" value="ECO:0007669"/>
    <property type="project" value="UniProtKB-UniRule"/>
</dbReference>
<dbReference type="GO" id="GO:0000287">
    <property type="term" value="F:magnesium ion binding"/>
    <property type="evidence" value="ECO:0007669"/>
    <property type="project" value="UniProtKB-UniRule"/>
</dbReference>
<dbReference type="GO" id="GO:0008270">
    <property type="term" value="F:zinc ion binding"/>
    <property type="evidence" value="ECO:0007669"/>
    <property type="project" value="UniProtKB-UniRule"/>
</dbReference>
<dbReference type="GO" id="GO:0006351">
    <property type="term" value="P:DNA-templated transcription"/>
    <property type="evidence" value="ECO:0007669"/>
    <property type="project" value="UniProtKB-UniRule"/>
</dbReference>
<dbReference type="CDD" id="cd02655">
    <property type="entry name" value="RNAP_beta'_C"/>
    <property type="match status" value="1"/>
</dbReference>
<dbReference type="CDD" id="cd01609">
    <property type="entry name" value="RNAP_beta'_N"/>
    <property type="match status" value="1"/>
</dbReference>
<dbReference type="FunFam" id="1.10.150.390:FF:000002">
    <property type="entry name" value="DNA-directed RNA polymerase subunit beta"/>
    <property type="match status" value="1"/>
</dbReference>
<dbReference type="FunFam" id="1.10.40.90:FF:000001">
    <property type="entry name" value="DNA-directed RNA polymerase subunit beta"/>
    <property type="match status" value="1"/>
</dbReference>
<dbReference type="FunFam" id="4.10.860.120:FF:000001">
    <property type="entry name" value="DNA-directed RNA polymerase subunit beta"/>
    <property type="match status" value="1"/>
</dbReference>
<dbReference type="Gene3D" id="1.10.132.30">
    <property type="match status" value="1"/>
</dbReference>
<dbReference type="Gene3D" id="1.10.150.390">
    <property type="match status" value="1"/>
</dbReference>
<dbReference type="Gene3D" id="1.10.1790.20">
    <property type="match status" value="1"/>
</dbReference>
<dbReference type="Gene3D" id="1.10.40.90">
    <property type="match status" value="1"/>
</dbReference>
<dbReference type="Gene3D" id="2.40.40.20">
    <property type="match status" value="1"/>
</dbReference>
<dbReference type="Gene3D" id="2.40.50.100">
    <property type="match status" value="1"/>
</dbReference>
<dbReference type="Gene3D" id="4.10.860.120">
    <property type="entry name" value="RNA polymerase II, clamp domain"/>
    <property type="match status" value="1"/>
</dbReference>
<dbReference type="Gene3D" id="1.10.274.100">
    <property type="entry name" value="RNA polymerase Rpb1, domain 3"/>
    <property type="match status" value="1"/>
</dbReference>
<dbReference type="HAMAP" id="MF_01322">
    <property type="entry name" value="RNApol_bact_RpoC"/>
    <property type="match status" value="1"/>
</dbReference>
<dbReference type="InterPro" id="IPR045867">
    <property type="entry name" value="DNA-dir_RpoC_beta_prime"/>
</dbReference>
<dbReference type="InterPro" id="IPR012754">
    <property type="entry name" value="DNA-dir_RpoC_beta_prime_bact"/>
</dbReference>
<dbReference type="InterPro" id="IPR000722">
    <property type="entry name" value="RNA_pol_asu"/>
</dbReference>
<dbReference type="InterPro" id="IPR006592">
    <property type="entry name" value="RNA_pol_N"/>
</dbReference>
<dbReference type="InterPro" id="IPR007080">
    <property type="entry name" value="RNA_pol_Rpb1_1"/>
</dbReference>
<dbReference type="InterPro" id="IPR007066">
    <property type="entry name" value="RNA_pol_Rpb1_3"/>
</dbReference>
<dbReference type="InterPro" id="IPR042102">
    <property type="entry name" value="RNA_pol_Rpb1_3_sf"/>
</dbReference>
<dbReference type="InterPro" id="IPR007083">
    <property type="entry name" value="RNA_pol_Rpb1_4"/>
</dbReference>
<dbReference type="InterPro" id="IPR007081">
    <property type="entry name" value="RNA_pol_Rpb1_5"/>
</dbReference>
<dbReference type="InterPro" id="IPR044893">
    <property type="entry name" value="RNA_pol_Rpb1_clamp_domain"/>
</dbReference>
<dbReference type="InterPro" id="IPR038120">
    <property type="entry name" value="Rpb1_funnel_sf"/>
</dbReference>
<dbReference type="NCBIfam" id="TIGR02386">
    <property type="entry name" value="rpoC_TIGR"/>
    <property type="match status" value="1"/>
</dbReference>
<dbReference type="PANTHER" id="PTHR19376">
    <property type="entry name" value="DNA-DIRECTED RNA POLYMERASE"/>
    <property type="match status" value="1"/>
</dbReference>
<dbReference type="PANTHER" id="PTHR19376:SF54">
    <property type="entry name" value="DNA-DIRECTED RNA POLYMERASE SUBUNIT BETA"/>
    <property type="match status" value="1"/>
</dbReference>
<dbReference type="Pfam" id="PF04997">
    <property type="entry name" value="RNA_pol_Rpb1_1"/>
    <property type="match status" value="1"/>
</dbReference>
<dbReference type="Pfam" id="PF00623">
    <property type="entry name" value="RNA_pol_Rpb1_2"/>
    <property type="match status" value="1"/>
</dbReference>
<dbReference type="Pfam" id="PF04983">
    <property type="entry name" value="RNA_pol_Rpb1_3"/>
    <property type="match status" value="1"/>
</dbReference>
<dbReference type="Pfam" id="PF05000">
    <property type="entry name" value="RNA_pol_Rpb1_4"/>
    <property type="match status" value="1"/>
</dbReference>
<dbReference type="Pfam" id="PF04998">
    <property type="entry name" value="RNA_pol_Rpb1_5"/>
    <property type="match status" value="1"/>
</dbReference>
<dbReference type="SMART" id="SM00663">
    <property type="entry name" value="RPOLA_N"/>
    <property type="match status" value="1"/>
</dbReference>
<dbReference type="SUPFAM" id="SSF64484">
    <property type="entry name" value="beta and beta-prime subunits of DNA dependent RNA-polymerase"/>
    <property type="match status" value="1"/>
</dbReference>
<proteinExistence type="inferred from homology"/>
<protein>
    <recommendedName>
        <fullName evidence="1">DNA-directed RNA polymerase subunit beta'</fullName>
        <shortName evidence="1">RNAP subunit beta'</shortName>
        <ecNumber evidence="1">2.7.7.6</ecNumber>
    </recommendedName>
    <alternativeName>
        <fullName evidence="1">RNA polymerase subunit beta'</fullName>
    </alternativeName>
    <alternativeName>
        <fullName evidence="1">Transcriptase subunit beta'</fullName>
    </alternativeName>
</protein>
<name>RPOC_CLOK5</name>
<organism>
    <name type="scientific">Clostridium kluyveri (strain ATCC 8527 / DSM 555 / NBRC 12016 / NCIMB 10680 / K1)</name>
    <dbReference type="NCBI Taxonomy" id="431943"/>
    <lineage>
        <taxon>Bacteria</taxon>
        <taxon>Bacillati</taxon>
        <taxon>Bacillota</taxon>
        <taxon>Clostridia</taxon>
        <taxon>Eubacteriales</taxon>
        <taxon>Clostridiaceae</taxon>
        <taxon>Clostridium</taxon>
    </lineage>
</organism>
<evidence type="ECO:0000255" key="1">
    <source>
        <dbReference type="HAMAP-Rule" id="MF_01322"/>
    </source>
</evidence>
<feature type="chain" id="PRO_0000353336" description="DNA-directed RNA polymerase subunit beta'">
    <location>
        <begin position="1"/>
        <end position="1174"/>
    </location>
</feature>
<feature type="binding site" evidence="1">
    <location>
        <position position="60"/>
    </location>
    <ligand>
        <name>Zn(2+)</name>
        <dbReference type="ChEBI" id="CHEBI:29105"/>
        <label>1</label>
    </ligand>
</feature>
<feature type="binding site" evidence="1">
    <location>
        <position position="62"/>
    </location>
    <ligand>
        <name>Zn(2+)</name>
        <dbReference type="ChEBI" id="CHEBI:29105"/>
        <label>1</label>
    </ligand>
</feature>
<feature type="binding site" evidence="1">
    <location>
        <position position="75"/>
    </location>
    <ligand>
        <name>Zn(2+)</name>
        <dbReference type="ChEBI" id="CHEBI:29105"/>
        <label>1</label>
    </ligand>
</feature>
<feature type="binding site" evidence="1">
    <location>
        <position position="78"/>
    </location>
    <ligand>
        <name>Zn(2+)</name>
        <dbReference type="ChEBI" id="CHEBI:29105"/>
        <label>1</label>
    </ligand>
</feature>
<feature type="binding site" evidence="1">
    <location>
        <position position="450"/>
    </location>
    <ligand>
        <name>Mg(2+)</name>
        <dbReference type="ChEBI" id="CHEBI:18420"/>
    </ligand>
</feature>
<feature type="binding site" evidence="1">
    <location>
        <position position="452"/>
    </location>
    <ligand>
        <name>Mg(2+)</name>
        <dbReference type="ChEBI" id="CHEBI:18420"/>
    </ligand>
</feature>
<feature type="binding site" evidence="1">
    <location>
        <position position="454"/>
    </location>
    <ligand>
        <name>Mg(2+)</name>
        <dbReference type="ChEBI" id="CHEBI:18420"/>
    </ligand>
</feature>
<feature type="binding site" evidence="1">
    <location>
        <position position="795"/>
    </location>
    <ligand>
        <name>Zn(2+)</name>
        <dbReference type="ChEBI" id="CHEBI:29105"/>
        <label>2</label>
    </ligand>
</feature>
<feature type="binding site" evidence="1">
    <location>
        <position position="869"/>
    </location>
    <ligand>
        <name>Zn(2+)</name>
        <dbReference type="ChEBI" id="CHEBI:29105"/>
        <label>2</label>
    </ligand>
</feature>
<feature type="binding site" evidence="1">
    <location>
        <position position="876"/>
    </location>
    <ligand>
        <name>Zn(2+)</name>
        <dbReference type="ChEBI" id="CHEBI:29105"/>
        <label>2</label>
    </ligand>
</feature>
<feature type="binding site" evidence="1">
    <location>
        <position position="879"/>
    </location>
    <ligand>
        <name>Zn(2+)</name>
        <dbReference type="ChEBI" id="CHEBI:29105"/>
        <label>2</label>
    </ligand>
</feature>
<sequence>MFELNNFDALQIGLASTEKIREWSRGEVKKPETINYRTLKPERDGLFCERIFGPQKDWECHCGKYKRIRYKGIVCDRCGVEVTKAKVRRERMGHIELAAPVSHIWYFKGIPSRMGLILDMSPRALEKVLYFASYVVLDPKETQLLKKQLLTEKEYREAVDKYGEQNFVASMGAESVKKLLEEIDLEQLSLVLKEDLKNSTGQKKIRIIRRLEVVESFRKSGNRPEWMVIDVIPVIPPDLRPMVQLDGGRFATSDLNDLYRRVINRNNRLKKLLDLGAPDIIVRNEKRMLQEAVDALIDNGRRGRPVTGPGNRPLKSLSDMLKGKQGRFRQNLLGKRVDYSGRSVIVVGPELKMYQCGLPKEMALELFKPFVMKKLVERGLAHNIKSAKRMVERVQAQVWDVLEEVISDHPVLLNRAPTLHRLGIQAFQPVLVEGRAIKLHPLSCTAYNADFDGDQMAVHVPLSVEAQSEARFLMLAAHNILKPSDGKPVVVPTQDMVLGSYYLTVEREGAKGEGRYFSFPDEVIMAYQLKQIDINAKIKVKMTKIIDGKYISGIIDATAGKIIFNECVPQDLGFIDRSKPGNEFKLEIDFLVAKKNLGKIINKCYMKHGATKTSIMLDKIKARGYHYSTISGITVSTSDMEVPEAKKRLLSESDAAVDKIEKMYRRGFISEDERYQRVIERWTKTTEDVADELMNNLDKFNPIFMMADSGARGSKSQIKQLAGMRGLMANPSGKIIELPIRASFREGLDVLEYFISTHGARKGNADTALKTADSGYLTRRLVDVSQDVIVREEDCGTYEGYDVSEIKEGNEVIESLSERLTGRYSAEDIIDPNNHQIIVPKNSYMDSKLADRIEASGIKKVKIRSVFTCKSRHGVCSKCYGMNMATAQKIDIGESVGIIAAQSIGEPGTQLTMRTFHTGGVAGSDITQGLPRVEELFEARKPKGLAIVSEVSGTVKMEETKKKRSVSVITDNGEEVTYDIPFGSRIKVSNGDLISAGDEVTEGSVNPHDILRIKGVQGVKNYLLSEVQKVYRLQGVDINDKHLEVVIRQMTRKIKIEESGDTELLPGTMIDIFDFEEENARVEASGGSAAQGRVALLGITKAALATESFLSAASFQETTRVLTDAAIKGKIDPLLGLKENVIIGKLIPAGTGMTRYRSIKINTENEVQENQLEA</sequence>
<comment type="function">
    <text evidence="1">DNA-dependent RNA polymerase catalyzes the transcription of DNA into RNA using the four ribonucleoside triphosphates as substrates.</text>
</comment>
<comment type="catalytic activity">
    <reaction evidence="1">
        <text>RNA(n) + a ribonucleoside 5'-triphosphate = RNA(n+1) + diphosphate</text>
        <dbReference type="Rhea" id="RHEA:21248"/>
        <dbReference type="Rhea" id="RHEA-COMP:14527"/>
        <dbReference type="Rhea" id="RHEA-COMP:17342"/>
        <dbReference type="ChEBI" id="CHEBI:33019"/>
        <dbReference type="ChEBI" id="CHEBI:61557"/>
        <dbReference type="ChEBI" id="CHEBI:140395"/>
        <dbReference type="EC" id="2.7.7.6"/>
    </reaction>
</comment>
<comment type="cofactor">
    <cofactor evidence="1">
        <name>Mg(2+)</name>
        <dbReference type="ChEBI" id="CHEBI:18420"/>
    </cofactor>
    <text evidence="1">Binds 1 Mg(2+) ion per subunit.</text>
</comment>
<comment type="cofactor">
    <cofactor evidence="1">
        <name>Zn(2+)</name>
        <dbReference type="ChEBI" id="CHEBI:29105"/>
    </cofactor>
    <text evidence="1">Binds 2 Zn(2+) ions per subunit.</text>
</comment>
<comment type="subunit">
    <text evidence="1">The RNAP catalytic core consists of 2 alpha, 1 beta, 1 beta' and 1 omega subunit. When a sigma factor is associated with the core the holoenzyme is formed, which can initiate transcription.</text>
</comment>
<comment type="similarity">
    <text evidence="1">Belongs to the RNA polymerase beta' chain family.</text>
</comment>
<keyword id="KW-0240">DNA-directed RNA polymerase</keyword>
<keyword id="KW-0460">Magnesium</keyword>
<keyword id="KW-0479">Metal-binding</keyword>
<keyword id="KW-0548">Nucleotidyltransferase</keyword>
<keyword id="KW-1185">Reference proteome</keyword>
<keyword id="KW-0804">Transcription</keyword>
<keyword id="KW-0808">Transferase</keyword>
<keyword id="KW-0862">Zinc</keyword>
<accession>A5N4P0</accession>
<reference key="1">
    <citation type="journal article" date="2008" name="Proc. Natl. Acad. Sci. U.S.A.">
        <title>The genome of Clostridium kluyveri, a strict anaerobe with unique metabolic features.</title>
        <authorList>
            <person name="Seedorf H."/>
            <person name="Fricke W.F."/>
            <person name="Veith B."/>
            <person name="Brueggemann H."/>
            <person name="Liesegang H."/>
            <person name="Strittmatter A."/>
            <person name="Miethke M."/>
            <person name="Buckel W."/>
            <person name="Hinderberger J."/>
            <person name="Li F."/>
            <person name="Hagemeier C."/>
            <person name="Thauer R.K."/>
            <person name="Gottschalk G."/>
        </authorList>
    </citation>
    <scope>NUCLEOTIDE SEQUENCE [LARGE SCALE GENOMIC DNA]</scope>
    <source>
        <strain>ATCC 8527 / DSM 555 / NBRC 12016 / NCIMB 10680 / K1</strain>
    </source>
</reference>